<sequence>MSKNYHIAVLPGDGIGPEVMAQALKVMDAVRSRFDMRITTSRYDVGGIAIDNHGHPLPKATVEGCEQADAILFGSVGGPKWENLPPESQPERGALLPLRKHFKLFSNLRPAKLYQGLEAFCPLRADIAANGFDILCVRELTGGIYFGQPKGREGSGQYEKAFDTEVYHRFEIERIARIAFESARKRRRKVTSIDKANVLQSSILWREIVNDVAKTYPDVELAHMYIDNATMQLIKDPSQFDVLLCSNLFGDILSDECAMITGSMGMLPSASLNEQGFGLYEPAGGSAPDIAGKNIANPIAQILSLALLLRYSLDANDAATAIEQAINRALEEGVRTGDLARGAAAVSTDEMGDIIARYVAEGV</sequence>
<keyword id="KW-0028">Amino-acid biosynthesis</keyword>
<keyword id="KW-0100">Branched-chain amino acid biosynthesis</keyword>
<keyword id="KW-0963">Cytoplasm</keyword>
<keyword id="KW-0432">Leucine biosynthesis</keyword>
<keyword id="KW-0460">Magnesium</keyword>
<keyword id="KW-0464">Manganese</keyword>
<keyword id="KW-0479">Metal-binding</keyword>
<keyword id="KW-0520">NAD</keyword>
<keyword id="KW-0560">Oxidoreductase</keyword>
<feature type="chain" id="PRO_0000083741" description="3-isopropylmalate dehydrogenase">
    <location>
        <begin position="1"/>
        <end position="363"/>
    </location>
</feature>
<feature type="binding site" evidence="1">
    <location>
        <begin position="78"/>
        <end position="91"/>
    </location>
    <ligand>
        <name>NAD(+)</name>
        <dbReference type="ChEBI" id="CHEBI:57540"/>
    </ligand>
</feature>
<feature type="binding site" evidence="1">
    <location>
        <position position="99"/>
    </location>
    <ligand>
        <name>substrate</name>
    </ligand>
</feature>
<feature type="binding site" evidence="1">
    <location>
        <position position="109"/>
    </location>
    <ligand>
        <name>substrate</name>
    </ligand>
</feature>
<feature type="binding site" evidence="1">
    <location>
        <position position="138"/>
    </location>
    <ligand>
        <name>substrate</name>
    </ligand>
</feature>
<feature type="binding site" evidence="1">
    <location>
        <position position="227"/>
    </location>
    <ligand>
        <name>Mg(2+)</name>
        <dbReference type="ChEBI" id="CHEBI:18420"/>
    </ligand>
</feature>
<feature type="binding site" evidence="1">
    <location>
        <position position="227"/>
    </location>
    <ligand>
        <name>substrate</name>
    </ligand>
</feature>
<feature type="binding site" evidence="1">
    <location>
        <position position="251"/>
    </location>
    <ligand>
        <name>Mg(2+)</name>
        <dbReference type="ChEBI" id="CHEBI:18420"/>
    </ligand>
</feature>
<feature type="binding site" evidence="1">
    <location>
        <position position="255"/>
    </location>
    <ligand>
        <name>Mg(2+)</name>
        <dbReference type="ChEBI" id="CHEBI:18420"/>
    </ligand>
</feature>
<feature type="binding site" evidence="1">
    <location>
        <begin position="285"/>
        <end position="297"/>
    </location>
    <ligand>
        <name>NAD(+)</name>
        <dbReference type="ChEBI" id="CHEBI:57540"/>
    </ligand>
</feature>
<feature type="site" description="Important for catalysis" evidence="1">
    <location>
        <position position="145"/>
    </location>
</feature>
<feature type="site" description="Important for catalysis" evidence="1">
    <location>
        <position position="195"/>
    </location>
</feature>
<protein>
    <recommendedName>
        <fullName evidence="1">3-isopropylmalate dehydrogenase</fullName>
        <ecNumber evidence="1">1.1.1.85</ecNumber>
    </recommendedName>
    <alternativeName>
        <fullName evidence="1">3-IPM-DH</fullName>
    </alternativeName>
    <alternativeName>
        <fullName evidence="1">Beta-IPM dehydrogenase</fullName>
        <shortName evidence="1">IMDH</shortName>
    </alternativeName>
</protein>
<evidence type="ECO:0000255" key="1">
    <source>
        <dbReference type="HAMAP-Rule" id="MF_01033"/>
    </source>
</evidence>
<name>LEU3_SALPA</name>
<accession>Q5PDG2</accession>
<organism>
    <name type="scientific">Salmonella paratyphi A (strain ATCC 9150 / SARB42)</name>
    <dbReference type="NCBI Taxonomy" id="295319"/>
    <lineage>
        <taxon>Bacteria</taxon>
        <taxon>Pseudomonadati</taxon>
        <taxon>Pseudomonadota</taxon>
        <taxon>Gammaproteobacteria</taxon>
        <taxon>Enterobacterales</taxon>
        <taxon>Enterobacteriaceae</taxon>
        <taxon>Salmonella</taxon>
    </lineage>
</organism>
<comment type="function">
    <text evidence="1">Catalyzes the oxidation of 3-carboxy-2-hydroxy-4-methylpentanoate (3-isopropylmalate) to 3-carboxy-4-methyl-2-oxopentanoate. The product decarboxylates to 4-methyl-2 oxopentanoate.</text>
</comment>
<comment type="catalytic activity">
    <reaction evidence="1">
        <text>(2R,3S)-3-isopropylmalate + NAD(+) = 4-methyl-2-oxopentanoate + CO2 + NADH</text>
        <dbReference type="Rhea" id="RHEA:32271"/>
        <dbReference type="ChEBI" id="CHEBI:16526"/>
        <dbReference type="ChEBI" id="CHEBI:17865"/>
        <dbReference type="ChEBI" id="CHEBI:35121"/>
        <dbReference type="ChEBI" id="CHEBI:57540"/>
        <dbReference type="ChEBI" id="CHEBI:57945"/>
        <dbReference type="EC" id="1.1.1.85"/>
    </reaction>
</comment>
<comment type="cofactor">
    <cofactor evidence="1">
        <name>Mg(2+)</name>
        <dbReference type="ChEBI" id="CHEBI:18420"/>
    </cofactor>
    <cofactor evidence="1">
        <name>Mn(2+)</name>
        <dbReference type="ChEBI" id="CHEBI:29035"/>
    </cofactor>
    <text evidence="1">Binds 1 Mg(2+) or Mn(2+) ion per subunit.</text>
</comment>
<comment type="pathway">
    <text evidence="1">Amino-acid biosynthesis; L-leucine biosynthesis; L-leucine from 3-methyl-2-oxobutanoate: step 3/4.</text>
</comment>
<comment type="subunit">
    <text evidence="1">Homodimer.</text>
</comment>
<comment type="subcellular location">
    <subcellularLocation>
        <location evidence="1">Cytoplasm</location>
    </subcellularLocation>
</comment>
<comment type="similarity">
    <text evidence="1">Belongs to the isocitrate and isopropylmalate dehydrogenases family. LeuB type 1 subfamily.</text>
</comment>
<dbReference type="EC" id="1.1.1.85" evidence="1"/>
<dbReference type="EMBL" id="CP000026">
    <property type="protein sequence ID" value="AAV76147.1"/>
    <property type="molecule type" value="Genomic_DNA"/>
</dbReference>
<dbReference type="RefSeq" id="WP_000042336.1">
    <property type="nucleotide sequence ID" value="NC_006511.1"/>
</dbReference>
<dbReference type="SMR" id="Q5PDG2"/>
<dbReference type="KEGG" id="spt:SPA0114"/>
<dbReference type="HOGENOM" id="CLU_031953_0_3_6"/>
<dbReference type="UniPathway" id="UPA00048">
    <property type="reaction ID" value="UER00072"/>
</dbReference>
<dbReference type="Proteomes" id="UP000008185">
    <property type="component" value="Chromosome"/>
</dbReference>
<dbReference type="GO" id="GO:0005829">
    <property type="term" value="C:cytosol"/>
    <property type="evidence" value="ECO:0007669"/>
    <property type="project" value="TreeGrafter"/>
</dbReference>
<dbReference type="GO" id="GO:0003862">
    <property type="term" value="F:3-isopropylmalate dehydrogenase activity"/>
    <property type="evidence" value="ECO:0007669"/>
    <property type="project" value="UniProtKB-UniRule"/>
</dbReference>
<dbReference type="GO" id="GO:0000287">
    <property type="term" value="F:magnesium ion binding"/>
    <property type="evidence" value="ECO:0007669"/>
    <property type="project" value="InterPro"/>
</dbReference>
<dbReference type="GO" id="GO:0051287">
    <property type="term" value="F:NAD binding"/>
    <property type="evidence" value="ECO:0007669"/>
    <property type="project" value="InterPro"/>
</dbReference>
<dbReference type="GO" id="GO:0009098">
    <property type="term" value="P:L-leucine biosynthetic process"/>
    <property type="evidence" value="ECO:0007669"/>
    <property type="project" value="UniProtKB-UniRule"/>
</dbReference>
<dbReference type="FunFam" id="3.40.718.10:FF:000004">
    <property type="entry name" value="3-isopropylmalate dehydrogenase"/>
    <property type="match status" value="1"/>
</dbReference>
<dbReference type="Gene3D" id="3.40.718.10">
    <property type="entry name" value="Isopropylmalate Dehydrogenase"/>
    <property type="match status" value="1"/>
</dbReference>
<dbReference type="HAMAP" id="MF_01033">
    <property type="entry name" value="LeuB_type1"/>
    <property type="match status" value="1"/>
</dbReference>
<dbReference type="InterPro" id="IPR019818">
    <property type="entry name" value="IsoCit/isopropylmalate_DH_CS"/>
</dbReference>
<dbReference type="InterPro" id="IPR024084">
    <property type="entry name" value="IsoPropMal-DH-like_dom"/>
</dbReference>
<dbReference type="InterPro" id="IPR004429">
    <property type="entry name" value="Isopropylmalate_DH"/>
</dbReference>
<dbReference type="NCBIfam" id="TIGR00169">
    <property type="entry name" value="leuB"/>
    <property type="match status" value="1"/>
</dbReference>
<dbReference type="PANTHER" id="PTHR42979">
    <property type="entry name" value="3-ISOPROPYLMALATE DEHYDROGENASE"/>
    <property type="match status" value="1"/>
</dbReference>
<dbReference type="PANTHER" id="PTHR42979:SF1">
    <property type="entry name" value="3-ISOPROPYLMALATE DEHYDROGENASE"/>
    <property type="match status" value="1"/>
</dbReference>
<dbReference type="Pfam" id="PF00180">
    <property type="entry name" value="Iso_dh"/>
    <property type="match status" value="1"/>
</dbReference>
<dbReference type="SMART" id="SM01329">
    <property type="entry name" value="Iso_dh"/>
    <property type="match status" value="1"/>
</dbReference>
<dbReference type="SUPFAM" id="SSF53659">
    <property type="entry name" value="Isocitrate/Isopropylmalate dehydrogenase-like"/>
    <property type="match status" value="1"/>
</dbReference>
<dbReference type="PROSITE" id="PS00470">
    <property type="entry name" value="IDH_IMDH"/>
    <property type="match status" value="1"/>
</dbReference>
<gene>
    <name evidence="1" type="primary">leuB</name>
    <name type="ordered locus">SPA0114</name>
</gene>
<proteinExistence type="inferred from homology"/>
<reference key="1">
    <citation type="journal article" date="2004" name="Nat. Genet.">
        <title>Comparison of genome degradation in Paratyphi A and Typhi, human-restricted serovars of Salmonella enterica that cause typhoid.</title>
        <authorList>
            <person name="McClelland M."/>
            <person name="Sanderson K.E."/>
            <person name="Clifton S.W."/>
            <person name="Latreille P."/>
            <person name="Porwollik S."/>
            <person name="Sabo A."/>
            <person name="Meyer R."/>
            <person name="Bieri T."/>
            <person name="Ozersky P."/>
            <person name="McLellan M."/>
            <person name="Harkins C.R."/>
            <person name="Wang C."/>
            <person name="Nguyen C."/>
            <person name="Berghoff A."/>
            <person name="Elliott G."/>
            <person name="Kohlberg S."/>
            <person name="Strong C."/>
            <person name="Du F."/>
            <person name="Carter J."/>
            <person name="Kremizki C."/>
            <person name="Layman D."/>
            <person name="Leonard S."/>
            <person name="Sun H."/>
            <person name="Fulton L."/>
            <person name="Nash W."/>
            <person name="Miner T."/>
            <person name="Minx P."/>
            <person name="Delehaunty K."/>
            <person name="Fronick C."/>
            <person name="Magrini V."/>
            <person name="Nhan M."/>
            <person name="Warren W."/>
            <person name="Florea L."/>
            <person name="Spieth J."/>
            <person name="Wilson R.K."/>
        </authorList>
    </citation>
    <scope>NUCLEOTIDE SEQUENCE [LARGE SCALE GENOMIC DNA]</scope>
    <source>
        <strain>ATCC 9150 / SARB42</strain>
    </source>
</reference>